<organism>
    <name type="scientific">Campylobacter jejuni (strain RM1221)</name>
    <dbReference type="NCBI Taxonomy" id="195099"/>
    <lineage>
        <taxon>Bacteria</taxon>
        <taxon>Pseudomonadati</taxon>
        <taxon>Campylobacterota</taxon>
        <taxon>Epsilonproteobacteria</taxon>
        <taxon>Campylobacterales</taxon>
        <taxon>Campylobacteraceae</taxon>
        <taxon>Campylobacter</taxon>
    </lineage>
</organism>
<keyword id="KW-0028">Amino-acid biosynthesis</keyword>
<keyword id="KW-0963">Cytoplasm</keyword>
<keyword id="KW-0554">One-carbon metabolism</keyword>
<keyword id="KW-0663">Pyridoxal phosphate</keyword>
<keyword id="KW-0808">Transferase</keyword>
<comment type="function">
    <text evidence="1">Catalyzes the reversible interconversion of serine and glycine with tetrahydrofolate (THF) serving as the one-carbon carrier. This reaction serves as the major source of one-carbon groups required for the biosynthesis of purines, thymidylate, methionine, and other important biomolecules. Also exhibits THF-independent aldolase activity toward beta-hydroxyamino acids, producing glycine and aldehydes, via a retro-aldol mechanism.</text>
</comment>
<comment type="catalytic activity">
    <reaction evidence="1">
        <text>(6R)-5,10-methylene-5,6,7,8-tetrahydrofolate + glycine + H2O = (6S)-5,6,7,8-tetrahydrofolate + L-serine</text>
        <dbReference type="Rhea" id="RHEA:15481"/>
        <dbReference type="ChEBI" id="CHEBI:15377"/>
        <dbReference type="ChEBI" id="CHEBI:15636"/>
        <dbReference type="ChEBI" id="CHEBI:33384"/>
        <dbReference type="ChEBI" id="CHEBI:57305"/>
        <dbReference type="ChEBI" id="CHEBI:57453"/>
        <dbReference type="EC" id="2.1.2.1"/>
    </reaction>
</comment>
<comment type="cofactor">
    <cofactor evidence="1">
        <name>pyridoxal 5'-phosphate</name>
        <dbReference type="ChEBI" id="CHEBI:597326"/>
    </cofactor>
</comment>
<comment type="pathway">
    <text evidence="1">One-carbon metabolism; tetrahydrofolate interconversion.</text>
</comment>
<comment type="pathway">
    <text evidence="1">Amino-acid biosynthesis; glycine biosynthesis; glycine from L-serine: step 1/1.</text>
</comment>
<comment type="subunit">
    <text evidence="1">Homodimer.</text>
</comment>
<comment type="subcellular location">
    <subcellularLocation>
        <location evidence="1">Cytoplasm</location>
    </subcellularLocation>
</comment>
<comment type="similarity">
    <text evidence="1">Belongs to the SHMT family.</text>
</comment>
<dbReference type="EC" id="2.1.2.1" evidence="1"/>
<dbReference type="EMBL" id="CP000025">
    <property type="protein sequence ID" value="AAW35040.1"/>
    <property type="molecule type" value="Genomic_DNA"/>
</dbReference>
<dbReference type="RefSeq" id="WP_002859480.1">
    <property type="nucleotide sequence ID" value="NC_003912.7"/>
</dbReference>
<dbReference type="SMR" id="Q5HW65"/>
<dbReference type="KEGG" id="cjr:CJE0451"/>
<dbReference type="HOGENOM" id="CLU_022477_2_1_7"/>
<dbReference type="UniPathway" id="UPA00193"/>
<dbReference type="UniPathway" id="UPA00288">
    <property type="reaction ID" value="UER01023"/>
</dbReference>
<dbReference type="GO" id="GO:0005829">
    <property type="term" value="C:cytosol"/>
    <property type="evidence" value="ECO:0007669"/>
    <property type="project" value="TreeGrafter"/>
</dbReference>
<dbReference type="GO" id="GO:0004372">
    <property type="term" value="F:glycine hydroxymethyltransferase activity"/>
    <property type="evidence" value="ECO:0007669"/>
    <property type="project" value="UniProtKB-UniRule"/>
</dbReference>
<dbReference type="GO" id="GO:0030170">
    <property type="term" value="F:pyridoxal phosphate binding"/>
    <property type="evidence" value="ECO:0007669"/>
    <property type="project" value="UniProtKB-UniRule"/>
</dbReference>
<dbReference type="GO" id="GO:0019264">
    <property type="term" value="P:glycine biosynthetic process from serine"/>
    <property type="evidence" value="ECO:0007669"/>
    <property type="project" value="UniProtKB-UniRule"/>
</dbReference>
<dbReference type="GO" id="GO:0035999">
    <property type="term" value="P:tetrahydrofolate interconversion"/>
    <property type="evidence" value="ECO:0007669"/>
    <property type="project" value="UniProtKB-UniRule"/>
</dbReference>
<dbReference type="CDD" id="cd00378">
    <property type="entry name" value="SHMT"/>
    <property type="match status" value="1"/>
</dbReference>
<dbReference type="FunFam" id="3.40.640.10:FF:000001">
    <property type="entry name" value="Serine hydroxymethyltransferase"/>
    <property type="match status" value="1"/>
</dbReference>
<dbReference type="Gene3D" id="3.90.1150.10">
    <property type="entry name" value="Aspartate Aminotransferase, domain 1"/>
    <property type="match status" value="1"/>
</dbReference>
<dbReference type="Gene3D" id="3.40.640.10">
    <property type="entry name" value="Type I PLP-dependent aspartate aminotransferase-like (Major domain)"/>
    <property type="match status" value="1"/>
</dbReference>
<dbReference type="HAMAP" id="MF_00051">
    <property type="entry name" value="SHMT"/>
    <property type="match status" value="1"/>
</dbReference>
<dbReference type="InterPro" id="IPR015424">
    <property type="entry name" value="PyrdxlP-dep_Trfase"/>
</dbReference>
<dbReference type="InterPro" id="IPR015421">
    <property type="entry name" value="PyrdxlP-dep_Trfase_major"/>
</dbReference>
<dbReference type="InterPro" id="IPR015422">
    <property type="entry name" value="PyrdxlP-dep_Trfase_small"/>
</dbReference>
<dbReference type="InterPro" id="IPR001085">
    <property type="entry name" value="Ser_HO-MeTrfase"/>
</dbReference>
<dbReference type="InterPro" id="IPR049943">
    <property type="entry name" value="Ser_HO-MeTrfase-like"/>
</dbReference>
<dbReference type="InterPro" id="IPR019798">
    <property type="entry name" value="Ser_HO-MeTrfase_PLP_BS"/>
</dbReference>
<dbReference type="InterPro" id="IPR039429">
    <property type="entry name" value="SHMT-like_dom"/>
</dbReference>
<dbReference type="NCBIfam" id="NF000586">
    <property type="entry name" value="PRK00011.1"/>
    <property type="match status" value="1"/>
</dbReference>
<dbReference type="PANTHER" id="PTHR11680">
    <property type="entry name" value="SERINE HYDROXYMETHYLTRANSFERASE"/>
    <property type="match status" value="1"/>
</dbReference>
<dbReference type="PANTHER" id="PTHR11680:SF50">
    <property type="entry name" value="SERINE HYDROXYMETHYLTRANSFERASE"/>
    <property type="match status" value="1"/>
</dbReference>
<dbReference type="Pfam" id="PF00464">
    <property type="entry name" value="SHMT"/>
    <property type="match status" value="1"/>
</dbReference>
<dbReference type="PIRSF" id="PIRSF000412">
    <property type="entry name" value="SHMT"/>
    <property type="match status" value="1"/>
</dbReference>
<dbReference type="SUPFAM" id="SSF53383">
    <property type="entry name" value="PLP-dependent transferases"/>
    <property type="match status" value="1"/>
</dbReference>
<dbReference type="PROSITE" id="PS00096">
    <property type="entry name" value="SHMT"/>
    <property type="match status" value="1"/>
</dbReference>
<proteinExistence type="inferred from homology"/>
<name>GLYA_CAMJR</name>
<sequence>MSLEMFDKEIFDLTNKELERQCEGLEMIASENFTLPEVMEVMGSILTNKYAEGYPGKRYYGGCEFVDEIETLAIERCKKLFNCKFANVQPNSGSQANQGVYAALINPGDKILGMDLSHGGHLTHGAKVSSSGKMYESCFYGVELDGRIDYEKVREIAKKEKPKLIVCGASAYARVIDFAKFREIADEVGAYLFADIAHIAGLVVAGEHPSPFPHAHVVSSTTHKTLRGPRGGIIMTNDEELAKKINSAIFPGIQGGPLMHVIAAKAVGFKFNLSDEWKVYAKQVRTNAQVLANVLMDRKFKLVSDGTDNHLVLMSFLDREFSGKDADLALGNAGITANKNTVPGEIRSPFITSGLRLGTPALTARGFKEKEMEIVSNYIADILDDVNNEKLQKNIKQELKKLASNFIIYERAMF</sequence>
<gene>
    <name evidence="1" type="primary">glyA</name>
    <name type="ordered locus">CJE0451</name>
</gene>
<feature type="chain" id="PRO_0000113555" description="Serine hydroxymethyltransferase">
    <location>
        <begin position="1"/>
        <end position="414"/>
    </location>
</feature>
<feature type="binding site" evidence="1">
    <location>
        <position position="116"/>
    </location>
    <ligand>
        <name>(6S)-5,6,7,8-tetrahydrofolate</name>
        <dbReference type="ChEBI" id="CHEBI:57453"/>
    </ligand>
</feature>
<feature type="binding site" evidence="1">
    <location>
        <begin position="120"/>
        <end position="122"/>
    </location>
    <ligand>
        <name>(6S)-5,6,7,8-tetrahydrofolate</name>
        <dbReference type="ChEBI" id="CHEBI:57453"/>
    </ligand>
</feature>
<feature type="binding site" evidence="1">
    <location>
        <position position="240"/>
    </location>
    <ligand>
        <name>(6S)-5,6,7,8-tetrahydrofolate</name>
        <dbReference type="ChEBI" id="CHEBI:57453"/>
    </ligand>
</feature>
<feature type="binding site" evidence="1">
    <location>
        <begin position="348"/>
        <end position="350"/>
    </location>
    <ligand>
        <name>(6S)-5,6,7,8-tetrahydrofolate</name>
        <dbReference type="ChEBI" id="CHEBI:57453"/>
    </ligand>
</feature>
<feature type="site" description="Plays an important role in substrate specificity" evidence="1">
    <location>
        <position position="223"/>
    </location>
</feature>
<feature type="modified residue" description="N6-(pyridoxal phosphate)lysine" evidence="1">
    <location>
        <position position="224"/>
    </location>
</feature>
<accession>Q5HW65</accession>
<reference key="1">
    <citation type="journal article" date="2005" name="PLoS Biol.">
        <title>Major structural differences and novel potential virulence mechanisms from the genomes of multiple Campylobacter species.</title>
        <authorList>
            <person name="Fouts D.E."/>
            <person name="Mongodin E.F."/>
            <person name="Mandrell R.E."/>
            <person name="Miller W.G."/>
            <person name="Rasko D.A."/>
            <person name="Ravel J."/>
            <person name="Brinkac L.M."/>
            <person name="DeBoy R.T."/>
            <person name="Parker C.T."/>
            <person name="Daugherty S.C."/>
            <person name="Dodson R.J."/>
            <person name="Durkin A.S."/>
            <person name="Madupu R."/>
            <person name="Sullivan S.A."/>
            <person name="Shetty J.U."/>
            <person name="Ayodeji M.A."/>
            <person name="Shvartsbeyn A."/>
            <person name="Schatz M.C."/>
            <person name="Badger J.H."/>
            <person name="Fraser C.M."/>
            <person name="Nelson K.E."/>
        </authorList>
    </citation>
    <scope>NUCLEOTIDE SEQUENCE [LARGE SCALE GENOMIC DNA]</scope>
    <source>
        <strain>RM1221</strain>
    </source>
</reference>
<evidence type="ECO:0000255" key="1">
    <source>
        <dbReference type="HAMAP-Rule" id="MF_00051"/>
    </source>
</evidence>
<protein>
    <recommendedName>
        <fullName evidence="1">Serine hydroxymethyltransferase</fullName>
        <shortName evidence="1">SHMT</shortName>
        <shortName evidence="1">Serine methylase</shortName>
        <ecNumber evidence="1">2.1.2.1</ecNumber>
    </recommendedName>
</protein>